<keyword id="KW-0066">ATP synthesis</keyword>
<keyword id="KW-0997">Cell inner membrane</keyword>
<keyword id="KW-1003">Cell membrane</keyword>
<keyword id="KW-0139">CF(1)</keyword>
<keyword id="KW-0375">Hydrogen ion transport</keyword>
<keyword id="KW-0406">Ion transport</keyword>
<keyword id="KW-0472">Membrane</keyword>
<keyword id="KW-0813">Transport</keyword>
<dbReference type="EMBL" id="CP000087">
    <property type="protein sequence ID" value="ABE04178.1"/>
    <property type="molecule type" value="Genomic_DNA"/>
</dbReference>
<dbReference type="RefSeq" id="WP_011476793.1">
    <property type="nucleotide sequence ID" value="NC_007940.1"/>
</dbReference>
<dbReference type="SMR" id="Q1RKD6"/>
<dbReference type="KEGG" id="rbe:RBE_0097"/>
<dbReference type="eggNOG" id="COG0355">
    <property type="taxonomic scope" value="Bacteria"/>
</dbReference>
<dbReference type="HOGENOM" id="CLU_084338_2_1_5"/>
<dbReference type="OrthoDB" id="9799969at2"/>
<dbReference type="Proteomes" id="UP000001951">
    <property type="component" value="Chromosome"/>
</dbReference>
<dbReference type="GO" id="GO:0005886">
    <property type="term" value="C:plasma membrane"/>
    <property type="evidence" value="ECO:0007669"/>
    <property type="project" value="UniProtKB-SubCell"/>
</dbReference>
<dbReference type="GO" id="GO:0045259">
    <property type="term" value="C:proton-transporting ATP synthase complex"/>
    <property type="evidence" value="ECO:0007669"/>
    <property type="project" value="UniProtKB-KW"/>
</dbReference>
<dbReference type="GO" id="GO:0005524">
    <property type="term" value="F:ATP binding"/>
    <property type="evidence" value="ECO:0007669"/>
    <property type="project" value="UniProtKB-UniRule"/>
</dbReference>
<dbReference type="GO" id="GO:0046933">
    <property type="term" value="F:proton-transporting ATP synthase activity, rotational mechanism"/>
    <property type="evidence" value="ECO:0007669"/>
    <property type="project" value="UniProtKB-UniRule"/>
</dbReference>
<dbReference type="CDD" id="cd12152">
    <property type="entry name" value="F1-ATPase_delta"/>
    <property type="match status" value="1"/>
</dbReference>
<dbReference type="Gene3D" id="2.60.15.10">
    <property type="entry name" value="F0F1 ATP synthase delta/epsilon subunit, N-terminal"/>
    <property type="match status" value="1"/>
</dbReference>
<dbReference type="HAMAP" id="MF_00530">
    <property type="entry name" value="ATP_synth_epsil_bac"/>
    <property type="match status" value="1"/>
</dbReference>
<dbReference type="InterPro" id="IPR001469">
    <property type="entry name" value="ATP_synth_F1_dsu/esu"/>
</dbReference>
<dbReference type="InterPro" id="IPR020546">
    <property type="entry name" value="ATP_synth_F1_dsu/esu_N"/>
</dbReference>
<dbReference type="InterPro" id="IPR036771">
    <property type="entry name" value="ATPsynth_dsu/esu_N"/>
</dbReference>
<dbReference type="NCBIfam" id="TIGR01216">
    <property type="entry name" value="ATP_synt_epsi"/>
    <property type="match status" value="1"/>
</dbReference>
<dbReference type="NCBIfam" id="NF002403">
    <property type="entry name" value="PRK01474.1"/>
    <property type="match status" value="1"/>
</dbReference>
<dbReference type="PANTHER" id="PTHR13822">
    <property type="entry name" value="ATP SYNTHASE DELTA/EPSILON CHAIN"/>
    <property type="match status" value="1"/>
</dbReference>
<dbReference type="PANTHER" id="PTHR13822:SF10">
    <property type="entry name" value="ATP SYNTHASE EPSILON CHAIN, CHLOROPLASTIC"/>
    <property type="match status" value="1"/>
</dbReference>
<dbReference type="Pfam" id="PF02823">
    <property type="entry name" value="ATP-synt_DE_N"/>
    <property type="match status" value="1"/>
</dbReference>
<dbReference type="SUPFAM" id="SSF51344">
    <property type="entry name" value="Epsilon subunit of F1F0-ATP synthase N-terminal domain"/>
    <property type="match status" value="1"/>
</dbReference>
<protein>
    <recommendedName>
        <fullName evidence="1">ATP synthase epsilon chain</fullName>
    </recommendedName>
    <alternativeName>
        <fullName evidence="1">ATP synthase F1 sector epsilon subunit</fullName>
    </alternativeName>
    <alternativeName>
        <fullName evidence="1">F-ATPase epsilon subunit</fullName>
    </alternativeName>
</protein>
<evidence type="ECO:0000255" key="1">
    <source>
        <dbReference type="HAMAP-Rule" id="MF_00530"/>
    </source>
</evidence>
<organism>
    <name type="scientific">Rickettsia bellii (strain RML369-C)</name>
    <dbReference type="NCBI Taxonomy" id="336407"/>
    <lineage>
        <taxon>Bacteria</taxon>
        <taxon>Pseudomonadati</taxon>
        <taxon>Pseudomonadota</taxon>
        <taxon>Alphaproteobacteria</taxon>
        <taxon>Rickettsiales</taxon>
        <taxon>Rickettsiaceae</taxon>
        <taxon>Rickettsieae</taxon>
        <taxon>Rickettsia</taxon>
        <taxon>belli group</taxon>
    </lineage>
</organism>
<comment type="function">
    <text evidence="1">Produces ATP from ADP in the presence of a proton gradient across the membrane.</text>
</comment>
<comment type="subunit">
    <text>F-type ATPases have 2 components, CF(1) - the catalytic core - and CF(0) - the membrane proton channel. CF(1) has five subunits: alpha(3), beta(3), gamma(1), delta(1), epsilon(1). CF(0) has three main subunits: a, b and c.</text>
</comment>
<comment type="subcellular location">
    <subcellularLocation>
        <location evidence="1">Cell inner membrane</location>
        <topology evidence="1">Peripheral membrane protein</topology>
    </subcellularLocation>
</comment>
<comment type="similarity">
    <text evidence="1">Belongs to the ATPase epsilon chain family.</text>
</comment>
<reference key="1">
    <citation type="journal article" date="2006" name="PLoS Genet.">
        <title>Genome sequence of Rickettsia bellii illuminates the role of amoebae in gene exchanges between intracellular pathogens.</title>
        <authorList>
            <person name="Ogata H."/>
            <person name="La Scola B."/>
            <person name="Audic S."/>
            <person name="Renesto P."/>
            <person name="Blanc G."/>
            <person name="Robert C."/>
            <person name="Fournier P.-E."/>
            <person name="Claverie J.-M."/>
            <person name="Raoult D."/>
        </authorList>
    </citation>
    <scope>NUCLEOTIDE SEQUENCE [LARGE SCALE GENOMIC DNA]</scope>
    <source>
        <strain>RML369-C</strain>
    </source>
</reference>
<name>ATPE_RICBR</name>
<feature type="chain" id="PRO_0000265880" description="ATP synthase epsilon chain">
    <location>
        <begin position="1"/>
        <end position="108"/>
    </location>
</feature>
<sequence>MSETINVKIITPLNIVFEEQAKMITLPGEEGEFGVLQGHAPMIVSLKAGLLKVYIDDMHKPKITYLIANGVTEVTGSYINIATETAINITDLSEAEIENKLTALQKSI</sequence>
<accession>Q1RKD6</accession>
<gene>
    <name evidence="1" type="primary">atpC</name>
    <name type="ordered locus">RBE_0097</name>
</gene>
<proteinExistence type="inferred from homology"/>